<accession>I1S2J3</accession>
<reference key="1">
    <citation type="journal article" date="2007" name="Science">
        <title>The Fusarium graminearum genome reveals a link between localized polymorphism and pathogen specialization.</title>
        <authorList>
            <person name="Cuomo C.A."/>
            <person name="Gueldener U."/>
            <person name="Xu J.-R."/>
            <person name="Trail F."/>
            <person name="Turgeon B.G."/>
            <person name="Di Pietro A."/>
            <person name="Walton J.D."/>
            <person name="Ma L.-J."/>
            <person name="Baker S.E."/>
            <person name="Rep M."/>
            <person name="Adam G."/>
            <person name="Antoniw J."/>
            <person name="Baldwin T."/>
            <person name="Calvo S.E."/>
            <person name="Chang Y.-L."/>
            <person name="DeCaprio D."/>
            <person name="Gale L.R."/>
            <person name="Gnerre S."/>
            <person name="Goswami R.S."/>
            <person name="Hammond-Kosack K."/>
            <person name="Harris L.J."/>
            <person name="Hilburn K."/>
            <person name="Kennell J.C."/>
            <person name="Kroken S."/>
            <person name="Magnuson J.K."/>
            <person name="Mannhaupt G."/>
            <person name="Mauceli E.W."/>
            <person name="Mewes H.-W."/>
            <person name="Mitterbauer R."/>
            <person name="Muehlbauer G."/>
            <person name="Muensterkoetter M."/>
            <person name="Nelson D."/>
            <person name="O'Donnell K."/>
            <person name="Ouellet T."/>
            <person name="Qi W."/>
            <person name="Quesneville H."/>
            <person name="Roncero M.I.G."/>
            <person name="Seong K.-Y."/>
            <person name="Tetko I.V."/>
            <person name="Urban M."/>
            <person name="Waalwijk C."/>
            <person name="Ward T.J."/>
            <person name="Yao J."/>
            <person name="Birren B.W."/>
            <person name="Kistler H.C."/>
        </authorList>
    </citation>
    <scope>NUCLEOTIDE SEQUENCE [LARGE SCALE GENOMIC DNA]</scope>
    <source>
        <strain>ATCC MYA-4620 / CBS 123657 / FGSC 9075 / NRRL 31084 / PH-1</strain>
    </source>
</reference>
<reference key="2">
    <citation type="journal article" date="2010" name="Nature">
        <title>Comparative genomics reveals mobile pathogenicity chromosomes in Fusarium.</title>
        <authorList>
            <person name="Ma L.-J."/>
            <person name="van der Does H.C."/>
            <person name="Borkovich K.A."/>
            <person name="Coleman J.J."/>
            <person name="Daboussi M.-J."/>
            <person name="Di Pietro A."/>
            <person name="Dufresne M."/>
            <person name="Freitag M."/>
            <person name="Grabherr M."/>
            <person name="Henrissat B."/>
            <person name="Houterman P.M."/>
            <person name="Kang S."/>
            <person name="Shim W.-B."/>
            <person name="Woloshuk C."/>
            <person name="Xie X."/>
            <person name="Xu J.-R."/>
            <person name="Antoniw J."/>
            <person name="Baker S.E."/>
            <person name="Bluhm B.H."/>
            <person name="Breakspear A."/>
            <person name="Brown D.W."/>
            <person name="Butchko R.A.E."/>
            <person name="Chapman S."/>
            <person name="Coulson R."/>
            <person name="Coutinho P.M."/>
            <person name="Danchin E.G.J."/>
            <person name="Diener A."/>
            <person name="Gale L.R."/>
            <person name="Gardiner D.M."/>
            <person name="Goff S."/>
            <person name="Hammond-Kosack K.E."/>
            <person name="Hilburn K."/>
            <person name="Hua-Van A."/>
            <person name="Jonkers W."/>
            <person name="Kazan K."/>
            <person name="Kodira C.D."/>
            <person name="Koehrsen M."/>
            <person name="Kumar L."/>
            <person name="Lee Y.-H."/>
            <person name="Li L."/>
            <person name="Manners J.M."/>
            <person name="Miranda-Saavedra D."/>
            <person name="Mukherjee M."/>
            <person name="Park G."/>
            <person name="Park J."/>
            <person name="Park S.-Y."/>
            <person name="Proctor R.H."/>
            <person name="Regev A."/>
            <person name="Ruiz-Roldan M.C."/>
            <person name="Sain D."/>
            <person name="Sakthikumar S."/>
            <person name="Sykes S."/>
            <person name="Schwartz D.C."/>
            <person name="Turgeon B.G."/>
            <person name="Wapinski I."/>
            <person name="Yoder O."/>
            <person name="Young S."/>
            <person name="Zeng Q."/>
            <person name="Zhou S."/>
            <person name="Galagan J."/>
            <person name="Cuomo C.A."/>
            <person name="Kistler H.C."/>
            <person name="Rep M."/>
        </authorList>
    </citation>
    <scope>GENOME REANNOTATION</scope>
    <source>
        <strain>ATCC MYA-4620 / CBS 123657 / FGSC 9075 / NRRL 31084 / PH-1</strain>
    </source>
</reference>
<reference key="3">
    <citation type="journal article" date="2015" name="BMC Genomics">
        <title>The completed genome sequence of the pathogenic ascomycete fungus Fusarium graminearum.</title>
        <authorList>
            <person name="King R."/>
            <person name="Urban M."/>
            <person name="Hammond-Kosack M.C.U."/>
            <person name="Hassani-Pak K."/>
            <person name="Hammond-Kosack K.E."/>
        </authorList>
    </citation>
    <scope>NUCLEOTIDE SEQUENCE [LARGE SCALE GENOMIC DNA]</scope>
    <source>
        <strain>ATCC MYA-4620 / CBS 123657 / FGSC 9075 / NRRL 31084 / PH-1</strain>
    </source>
</reference>
<reference key="4">
    <citation type="submission" date="2017-01" db="UniProtKB">
        <authorList>
            <consortium name="EnsemblFungi"/>
        </authorList>
    </citation>
    <scope>IDENTIFICATION</scope>
    <source>
        <strain>ATCC MYA-4620 / CBS 123657 / FGSC 9075 / NRRL 31084 / PH-1</strain>
    </source>
</reference>
<reference key="5">
    <citation type="journal article" date="2012" name="Plant Cell">
        <title>In planta stage-specific fungal gene profiling elucidates the molecular strategies of Fusarium graminearum growing inside wheat coleoptiles.</title>
        <authorList>
            <person name="Zhang X.W."/>
            <person name="Jia L.J."/>
            <person name="Zhang Y."/>
            <person name="Jiang G."/>
            <person name="Li X."/>
            <person name="Zhang D."/>
            <person name="Tang W.H."/>
        </authorList>
    </citation>
    <scope>INDUCTION</scope>
</reference>
<reference key="6">
    <citation type="journal article" date="2014" name="PLoS ONE">
        <title>The Fusarium graminearum genome reveals more secondary metabolite gene clusters and hints of horizontal gene transfer.</title>
        <authorList>
            <person name="Sieber C.M."/>
            <person name="Lee W."/>
            <person name="Wong P."/>
            <person name="Muensterkoetter M."/>
            <person name="Mewes H.W."/>
            <person name="Schmeitzl C."/>
            <person name="Varga E."/>
            <person name="Berthiller F."/>
            <person name="Adam G."/>
            <person name="Gueldener U."/>
        </authorList>
    </citation>
    <scope>IDENTIFICATION</scope>
    <scope>INDUCTION</scope>
</reference>
<reference key="7">
    <citation type="journal article" date="2019" name="Nat. Commun.">
        <title>A linear nonribosomal octapeptide from Fusarium graminearum facilitates cell-to-cell invasion of wheat.</title>
        <authorList>
            <person name="Jia L.J."/>
            <person name="Tang H.Y."/>
            <person name="Wang W.Q."/>
            <person name="Yuan T.L."/>
            <person name="Wei W.Q."/>
            <person name="Pang B."/>
            <person name="Gong X.M."/>
            <person name="Wang S.F."/>
            <person name="Li Y.J."/>
            <person name="Zhang D."/>
            <person name="Liu W."/>
            <person name="Tang W.H."/>
        </authorList>
    </citation>
    <scope>FUNCTION</scope>
    <scope>DISRUPTION PHENOTYPE</scope>
</reference>
<reference key="8">
    <citation type="journal article" date="2019" name="Toxins">
        <title>Fusaoctaxin A, an example of a two-step mechanism for non-ribosomal peptide assembly and maturation in fungi.</title>
        <authorList>
            <person name="Westphal K.R."/>
            <person name="Nielsen K.A.H."/>
            <person name="Wollenberg R.D."/>
            <person name="Moellehoej M.B."/>
            <person name="Bachleitner S."/>
            <person name="Studt L."/>
            <person name="Lysoee E."/>
            <person name="Giese H."/>
            <person name="Wimmer R."/>
            <person name="Soerensen J.L."/>
            <person name="Sondergaard T.E."/>
        </authorList>
    </citation>
    <scope>FUNCTION</scope>
    <scope>INDUCTION</scope>
</reference>
<gene>
    <name evidence="8" type="primary">FGM9</name>
    <name type="ORF">FG10989</name>
    <name type="ORF">FGRAMPH1_01T20957</name>
</gene>
<feature type="chain" id="PRO_0000449951" description="Short chain dehydrogenase FGM9">
    <location>
        <begin position="1"/>
        <end position="341"/>
    </location>
</feature>
<feature type="active site" description="Proton donor" evidence="2">
    <location>
        <position position="167"/>
    </location>
</feature>
<feature type="active site" description="Proton donor" evidence="2">
    <location>
        <position position="200"/>
    </location>
</feature>
<feature type="active site" description="Lowers pKa of active site Tyr" evidence="2">
    <location>
        <position position="204"/>
    </location>
</feature>
<feature type="binding site" evidence="1">
    <location>
        <position position="38"/>
    </location>
    <ligand>
        <name>NADP(+)</name>
        <dbReference type="ChEBI" id="CHEBI:58349"/>
    </ligand>
</feature>
<feature type="binding site" evidence="1">
    <location>
        <position position="63"/>
    </location>
    <ligand>
        <name>NADP(+)</name>
        <dbReference type="ChEBI" id="CHEBI:58349"/>
    </ligand>
</feature>
<feature type="binding site" evidence="1">
    <location>
        <position position="88"/>
    </location>
    <ligand>
        <name>NADP(+)</name>
        <dbReference type="ChEBI" id="CHEBI:58349"/>
    </ligand>
</feature>
<feature type="binding site" evidence="2">
    <location>
        <position position="114"/>
    </location>
    <ligand>
        <name>NADP(+)</name>
        <dbReference type="ChEBI" id="CHEBI:58349"/>
    </ligand>
</feature>
<feature type="binding site" evidence="2">
    <location>
        <position position="200"/>
    </location>
    <ligand>
        <name>NADP(+)</name>
        <dbReference type="ChEBI" id="CHEBI:58349"/>
    </ligand>
</feature>
<feature type="binding site" evidence="2">
    <location>
        <position position="204"/>
    </location>
    <ligand>
        <name>NADP(+)</name>
        <dbReference type="ChEBI" id="CHEBI:58349"/>
    </ligand>
</feature>
<protein>
    <recommendedName>
        <fullName evidence="8">Short chain dehydrogenase FGM9</fullName>
        <ecNumber evidence="10">1.1.1.-</ecNumber>
    </recommendedName>
    <alternativeName>
        <fullName evidence="7">C64 cluster protein NRPS5</fullName>
    </alternativeName>
    <alternativeName>
        <fullName evidence="8">Fg3_54 cluster protein FGM9</fullName>
    </alternativeName>
    <alternativeName>
        <fullName evidence="8">Fusaoctaxin A biosynthesis cluster protein FGM9</fullName>
    </alternativeName>
</protein>
<dbReference type="EC" id="1.1.1.-" evidence="10"/>
<dbReference type="EMBL" id="HG970334">
    <property type="protein sequence ID" value="CEF87006.1"/>
    <property type="molecule type" value="Genomic_DNA"/>
</dbReference>
<dbReference type="RefSeq" id="XP_011325381.1">
    <property type="nucleotide sequence ID" value="XM_011327079.1"/>
</dbReference>
<dbReference type="SMR" id="I1S2J3"/>
<dbReference type="FunCoup" id="I1S2J3">
    <property type="interactions" value="143"/>
</dbReference>
<dbReference type="STRING" id="229533.I1S2J3"/>
<dbReference type="KEGG" id="fgr:FGSG_10989"/>
<dbReference type="VEuPathDB" id="FungiDB:FGRAMPH1_01G20957"/>
<dbReference type="eggNOG" id="KOG1208">
    <property type="taxonomic scope" value="Eukaryota"/>
</dbReference>
<dbReference type="HOGENOM" id="CLU_010194_44_4_1"/>
<dbReference type="InParanoid" id="I1S2J3"/>
<dbReference type="OrthoDB" id="89956at110618"/>
<dbReference type="PHI-base" id="PHI:9041"/>
<dbReference type="Proteomes" id="UP000070720">
    <property type="component" value="Chromosome 3"/>
</dbReference>
<dbReference type="GO" id="GO:0016491">
    <property type="term" value="F:oxidoreductase activity"/>
    <property type="evidence" value="ECO:0007669"/>
    <property type="project" value="UniProtKB-KW"/>
</dbReference>
<dbReference type="Gene3D" id="3.40.50.720">
    <property type="entry name" value="NAD(P)-binding Rossmann-like Domain"/>
    <property type="match status" value="1"/>
</dbReference>
<dbReference type="InterPro" id="IPR036291">
    <property type="entry name" value="NAD(P)-bd_dom_sf"/>
</dbReference>
<dbReference type="InterPro" id="IPR002347">
    <property type="entry name" value="SDR_fam"/>
</dbReference>
<dbReference type="PANTHER" id="PTHR24320:SF252">
    <property type="entry name" value="DEHYDROGENASE_REDUCTASE FAMILY PROTEIN, PUTATIVE (AFU_ORTHOLOGUE AFUA_3G08550)-RELATED"/>
    <property type="match status" value="1"/>
</dbReference>
<dbReference type="PANTHER" id="PTHR24320">
    <property type="entry name" value="RETINOL DEHYDROGENASE"/>
    <property type="match status" value="1"/>
</dbReference>
<dbReference type="Pfam" id="PF00106">
    <property type="entry name" value="adh_short"/>
    <property type="match status" value="1"/>
</dbReference>
<dbReference type="PRINTS" id="PR00081">
    <property type="entry name" value="GDHRDH"/>
</dbReference>
<dbReference type="SUPFAM" id="SSF51735">
    <property type="entry name" value="NAD(P)-binding Rossmann-fold domains"/>
    <property type="match status" value="1"/>
</dbReference>
<proteinExistence type="evidence at transcript level"/>
<comment type="function">
    <text evidence="5 6 10">Short chain dehydrogenase; part of the Fg3_54/C64 gene cluster that mediates the biosynthesis of the octapeptide fusaoctaxin A, a virulence factor that is required for cell-to-cell invasiveness of plant host (PubMed:30804501). The 2 nonribosomal peptide synthetases NRPS9 and NRPS5 form an assembly line which likely utilizes GABA as a starter unit (loaded on the unique module M1 of NRPS9) and sequentially incorporates seven extender units composed of the residues L-Ala, L-allo-Ile, L-Ser, L-Val, L-Ser, L-Leu and L-Leu, respectively (PubMed:30804501, PubMed:31100892). During the process, each of the residues that are tethered on modules M3-M7 of NRPS5 containing an E domain can undergo an epimerization reaction to produce a D-configuration before the transpeptidation reaction occurs (PubMed:30804501, PubMed:31100892). The elongation of the peptidyl chain might be terminated by module M8-mediated L-Leu incorporation, followed by R domain-catalyzed 4 electron reduction to release the resulting octapeptide from the assembly line as an alcohol (PubMed:30804501, PubMed:31100892). Fusaoctaxin A is cleaved by the cluster specific ABC transporter FGM5 to the pentapeptide fusapentaxin A and the tripeptide fusatrixin A (PubMed:31100892). The other enzymes from the cluster, FGM1, FGM2, FGM3 and FGM9 seem not to be involved in the biosynthesis of fusaoctaxin A and their functions have still to be determined (Probable).</text>
</comment>
<comment type="pathway">
    <text>Secondary metabolite biosynthesis.</text>
</comment>
<comment type="induction">
    <text evidence="3 4 6">Expression is positively regulated by the cluster-specific transcription factor FGM4 and is induced during infection of coleoptiles of wheat seedlings (PubMed:23266949, PubMed:25333987). The fusaoctaxin A gene cluster is silenced by H3K27 trimethylation by the histone methyltransferase KMT6 (PubMed:31100892).</text>
</comment>
<comment type="disruption phenotype">
    <text evidence="5">Produces significantly smaller lesions and fewer spikelets with blight symptoms on susceptible wheat cultivars.</text>
</comment>
<comment type="similarity">
    <text evidence="9">Belongs to the short-chain dehydrogenases/reductases (SDR) family.</text>
</comment>
<name>FGM9_GIBZE</name>
<keyword id="KW-0521">NADP</keyword>
<keyword id="KW-0560">Oxidoreductase</keyword>
<keyword id="KW-1185">Reference proteome</keyword>
<sequence>MSGISFKSFVQSQYTPIPLPNHDFTGQTILITGASRGLGLEAASHFYRLNASKIILAVRDARKGPECIAFVRQYNPSSNTTVECWELDLTNVETIRQFVAKAKNLARLDAVILNAGMATMSFQAIDGMEKTLATNVTGTFLLAIGLLPALRLSGLRNNIRPRMVLVSSQGHEAAAFAERDADDIFAALNDADKTDMTDRYDTSKLIQLLAFYALKDTVDKSWPDSITFTAVDPGLCDTDLTRDIPLLIRIIHRIMKMLLARTAEVGGRCLVLGAADDEHSHGAYFKDGVIGSPPVAVTDPEGVELKNRVFSQLKSLLYSVDPQIMDACPVMESDEEAIRLN</sequence>
<evidence type="ECO:0000250" key="1">
    <source>
        <dbReference type="UniProtKB" id="L0E2Z4"/>
    </source>
</evidence>
<evidence type="ECO:0000250" key="2">
    <source>
        <dbReference type="UniProtKB" id="O93868"/>
    </source>
</evidence>
<evidence type="ECO:0000269" key="3">
    <source>
    </source>
</evidence>
<evidence type="ECO:0000269" key="4">
    <source>
    </source>
</evidence>
<evidence type="ECO:0000269" key="5">
    <source>
    </source>
</evidence>
<evidence type="ECO:0000269" key="6">
    <source>
    </source>
</evidence>
<evidence type="ECO:0000303" key="7">
    <source>
    </source>
</evidence>
<evidence type="ECO:0000303" key="8">
    <source>
    </source>
</evidence>
<evidence type="ECO:0000305" key="9"/>
<evidence type="ECO:0000305" key="10">
    <source>
    </source>
</evidence>
<organism>
    <name type="scientific">Gibberella zeae (strain ATCC MYA-4620 / CBS 123657 / FGSC 9075 / NRRL 31084 / PH-1)</name>
    <name type="common">Wheat head blight fungus</name>
    <name type="synonym">Fusarium graminearum</name>
    <dbReference type="NCBI Taxonomy" id="229533"/>
    <lineage>
        <taxon>Eukaryota</taxon>
        <taxon>Fungi</taxon>
        <taxon>Dikarya</taxon>
        <taxon>Ascomycota</taxon>
        <taxon>Pezizomycotina</taxon>
        <taxon>Sordariomycetes</taxon>
        <taxon>Hypocreomycetidae</taxon>
        <taxon>Hypocreales</taxon>
        <taxon>Nectriaceae</taxon>
        <taxon>Fusarium</taxon>
    </lineage>
</organism>